<comment type="function">
    <text evidence="1">An aminoacyl-tRNA editing enzyme that deacylates mischarged D-aminoacyl-tRNAs. Also deacylates mischarged glycyl-tRNA(Ala), protecting cells against glycine mischarging by AlaRS. Acts via tRNA-based rather than protein-based catalysis; rejects L-amino acids rather than detecting D-amino acids in the active site. By recycling D-aminoacyl-tRNA to D-amino acids and free tRNA molecules, this enzyme counteracts the toxicity associated with the formation of D-aminoacyl-tRNA entities in vivo and helps enforce protein L-homochirality.</text>
</comment>
<comment type="catalytic activity">
    <reaction evidence="1">
        <text>glycyl-tRNA(Ala) + H2O = tRNA(Ala) + glycine + H(+)</text>
        <dbReference type="Rhea" id="RHEA:53744"/>
        <dbReference type="Rhea" id="RHEA-COMP:9657"/>
        <dbReference type="Rhea" id="RHEA-COMP:13640"/>
        <dbReference type="ChEBI" id="CHEBI:15377"/>
        <dbReference type="ChEBI" id="CHEBI:15378"/>
        <dbReference type="ChEBI" id="CHEBI:57305"/>
        <dbReference type="ChEBI" id="CHEBI:78442"/>
        <dbReference type="ChEBI" id="CHEBI:78522"/>
        <dbReference type="EC" id="3.1.1.96"/>
    </reaction>
</comment>
<comment type="catalytic activity">
    <reaction evidence="1">
        <text>a D-aminoacyl-tRNA + H2O = a tRNA + a D-alpha-amino acid + H(+)</text>
        <dbReference type="Rhea" id="RHEA:13953"/>
        <dbReference type="Rhea" id="RHEA-COMP:10123"/>
        <dbReference type="Rhea" id="RHEA-COMP:10124"/>
        <dbReference type="ChEBI" id="CHEBI:15377"/>
        <dbReference type="ChEBI" id="CHEBI:15378"/>
        <dbReference type="ChEBI" id="CHEBI:59871"/>
        <dbReference type="ChEBI" id="CHEBI:78442"/>
        <dbReference type="ChEBI" id="CHEBI:79333"/>
        <dbReference type="EC" id="3.1.1.96"/>
    </reaction>
</comment>
<comment type="subunit">
    <text evidence="1">Homodimer.</text>
</comment>
<comment type="subcellular location">
    <subcellularLocation>
        <location evidence="1">Cytoplasm</location>
    </subcellularLocation>
</comment>
<comment type="domain">
    <text evidence="1">A Gly-cisPro motif from one monomer fits into the active site of the other monomer to allow specific chiral rejection of L-amino acids.</text>
</comment>
<comment type="similarity">
    <text evidence="1">Belongs to the DTD family.</text>
</comment>
<dbReference type="EC" id="3.1.1.96" evidence="1"/>
<dbReference type="EMBL" id="AE017333">
    <property type="protein sequence ID" value="AAU41754.1"/>
    <property type="molecule type" value="Genomic_DNA"/>
</dbReference>
<dbReference type="EMBL" id="CP000002">
    <property type="protein sequence ID" value="AAU24391.1"/>
    <property type="molecule type" value="Genomic_DNA"/>
</dbReference>
<dbReference type="RefSeq" id="WP_003183959.1">
    <property type="nucleotide sequence ID" value="NC_006322.1"/>
</dbReference>
<dbReference type="SMR" id="Q65GR0"/>
<dbReference type="STRING" id="279010.BL01123"/>
<dbReference type="GeneID" id="92860520"/>
<dbReference type="KEGG" id="bld:BLi02886"/>
<dbReference type="KEGG" id="bli:BL01123"/>
<dbReference type="eggNOG" id="COG1490">
    <property type="taxonomic scope" value="Bacteria"/>
</dbReference>
<dbReference type="HOGENOM" id="CLU_076901_1_0_9"/>
<dbReference type="Proteomes" id="UP000000606">
    <property type="component" value="Chromosome"/>
</dbReference>
<dbReference type="Bgee" id="BL01123">
    <property type="expression patterns" value="Expressed in hepatic cecum"/>
</dbReference>
<dbReference type="GO" id="GO:0005737">
    <property type="term" value="C:cytoplasm"/>
    <property type="evidence" value="ECO:0007669"/>
    <property type="project" value="UniProtKB-SubCell"/>
</dbReference>
<dbReference type="GO" id="GO:0051500">
    <property type="term" value="F:D-tyrosyl-tRNA(Tyr) deacylase activity"/>
    <property type="evidence" value="ECO:0007669"/>
    <property type="project" value="TreeGrafter"/>
</dbReference>
<dbReference type="GO" id="GO:0106026">
    <property type="term" value="F:Gly-tRNA(Ala) deacylase activity"/>
    <property type="evidence" value="ECO:0007669"/>
    <property type="project" value="UniProtKB-UniRule"/>
</dbReference>
<dbReference type="GO" id="GO:0043908">
    <property type="term" value="F:Ser(Gly)-tRNA(Ala) hydrolase activity"/>
    <property type="evidence" value="ECO:0007669"/>
    <property type="project" value="UniProtKB-UniRule"/>
</dbReference>
<dbReference type="GO" id="GO:0000049">
    <property type="term" value="F:tRNA binding"/>
    <property type="evidence" value="ECO:0007669"/>
    <property type="project" value="UniProtKB-UniRule"/>
</dbReference>
<dbReference type="GO" id="GO:0019478">
    <property type="term" value="P:D-amino acid catabolic process"/>
    <property type="evidence" value="ECO:0007669"/>
    <property type="project" value="UniProtKB-UniRule"/>
</dbReference>
<dbReference type="CDD" id="cd00563">
    <property type="entry name" value="Dtyr_deacylase"/>
    <property type="match status" value="1"/>
</dbReference>
<dbReference type="FunFam" id="3.50.80.10:FF:000001">
    <property type="entry name" value="D-aminoacyl-tRNA deacylase"/>
    <property type="match status" value="1"/>
</dbReference>
<dbReference type="Gene3D" id="3.50.80.10">
    <property type="entry name" value="D-tyrosyl-tRNA(Tyr) deacylase"/>
    <property type="match status" value="1"/>
</dbReference>
<dbReference type="HAMAP" id="MF_00518">
    <property type="entry name" value="Deacylase_Dtd"/>
    <property type="match status" value="1"/>
</dbReference>
<dbReference type="InterPro" id="IPR003732">
    <property type="entry name" value="Daa-tRNA_deacyls_DTD"/>
</dbReference>
<dbReference type="InterPro" id="IPR023509">
    <property type="entry name" value="DTD-like_sf"/>
</dbReference>
<dbReference type="NCBIfam" id="TIGR00256">
    <property type="entry name" value="D-aminoacyl-tRNA deacylase"/>
    <property type="match status" value="1"/>
</dbReference>
<dbReference type="PANTHER" id="PTHR10472:SF5">
    <property type="entry name" value="D-AMINOACYL-TRNA DEACYLASE 1"/>
    <property type="match status" value="1"/>
</dbReference>
<dbReference type="PANTHER" id="PTHR10472">
    <property type="entry name" value="D-TYROSYL-TRNA TYR DEACYLASE"/>
    <property type="match status" value="1"/>
</dbReference>
<dbReference type="Pfam" id="PF02580">
    <property type="entry name" value="Tyr_Deacylase"/>
    <property type="match status" value="1"/>
</dbReference>
<dbReference type="SUPFAM" id="SSF69500">
    <property type="entry name" value="DTD-like"/>
    <property type="match status" value="1"/>
</dbReference>
<feature type="chain" id="PRO_0000259262" description="D-aminoacyl-tRNA deacylase">
    <location>
        <begin position="1"/>
        <end position="147"/>
    </location>
</feature>
<feature type="short sequence motif" description="Gly-cisPro motif, important for rejection of L-amino acids" evidence="1">
    <location>
        <begin position="137"/>
        <end position="138"/>
    </location>
</feature>
<protein>
    <recommendedName>
        <fullName evidence="1">D-aminoacyl-tRNA deacylase</fullName>
        <shortName evidence="1">DTD</shortName>
        <ecNumber evidence="1">3.1.1.96</ecNumber>
    </recommendedName>
    <alternativeName>
        <fullName evidence="1">Gly-tRNA(Ala) deacylase</fullName>
    </alternativeName>
</protein>
<accession>Q65GR0</accession>
<accession>Q62S69</accession>
<reference key="1">
    <citation type="journal article" date="2004" name="J. Mol. Microbiol. Biotechnol.">
        <title>The complete genome sequence of Bacillus licheniformis DSM13, an organism with great industrial potential.</title>
        <authorList>
            <person name="Veith B."/>
            <person name="Herzberg C."/>
            <person name="Steckel S."/>
            <person name="Feesche J."/>
            <person name="Maurer K.H."/>
            <person name="Ehrenreich P."/>
            <person name="Baeumer S."/>
            <person name="Henne A."/>
            <person name="Liesegang H."/>
            <person name="Merkl R."/>
            <person name="Ehrenreich A."/>
            <person name="Gottschalk G."/>
        </authorList>
    </citation>
    <scope>NUCLEOTIDE SEQUENCE [LARGE SCALE GENOMIC DNA]</scope>
    <source>
        <strain>ATCC 14580 / DSM 13 / JCM 2505 / CCUG 7422 / NBRC 12200 / NCIMB 9375 / NCTC 10341 / NRRL NRS-1264 / Gibson 46</strain>
    </source>
</reference>
<reference key="2">
    <citation type="journal article" date="2004" name="Genome Biol.">
        <title>Complete genome sequence of the industrial bacterium Bacillus licheniformis and comparisons with closely related Bacillus species.</title>
        <authorList>
            <person name="Rey M.W."/>
            <person name="Ramaiya P."/>
            <person name="Nelson B.A."/>
            <person name="Brody-Karpin S.D."/>
            <person name="Zaretsky E.J."/>
            <person name="Tang M."/>
            <person name="Lopez de Leon A."/>
            <person name="Xiang H."/>
            <person name="Gusti V."/>
            <person name="Clausen I.G."/>
            <person name="Olsen P.B."/>
            <person name="Rasmussen M.D."/>
            <person name="Andersen J.T."/>
            <person name="Joergensen P.L."/>
            <person name="Larsen T.S."/>
            <person name="Sorokin A."/>
            <person name="Bolotin A."/>
            <person name="Lapidus A."/>
            <person name="Galleron N."/>
            <person name="Ehrlich S.D."/>
            <person name="Berka R.M."/>
        </authorList>
    </citation>
    <scope>NUCLEOTIDE SEQUENCE [LARGE SCALE GENOMIC DNA]</scope>
    <source>
        <strain>ATCC 14580 / DSM 13 / JCM 2505 / CCUG 7422 / NBRC 12200 / NCIMB 9375 / NCTC 10341 / NRRL NRS-1264 / Gibson 46</strain>
    </source>
</reference>
<evidence type="ECO:0000255" key="1">
    <source>
        <dbReference type="HAMAP-Rule" id="MF_00518"/>
    </source>
</evidence>
<name>DTD_BACLD</name>
<sequence>MRLVVQRVTDASVSVGGETVGEIGLGLMVLVGVTHEDTSEDAAYLAEKLVNLRIFEDEGEKMNLSLLDVGGSVLSVSQFTLYGDTKKGRRPNFTKAAKPDQALQLYEEWNSMLRAKGVTVETGRFGEMMDVKLTNSGPVTFIMDSKA</sequence>
<proteinExistence type="inferred from homology"/>
<organism>
    <name type="scientific">Bacillus licheniformis (strain ATCC 14580 / DSM 13 / JCM 2505 / CCUG 7422 / NBRC 12200 / NCIMB 9375 / NCTC 10341 / NRRL NRS-1264 / Gibson 46)</name>
    <dbReference type="NCBI Taxonomy" id="279010"/>
    <lineage>
        <taxon>Bacteria</taxon>
        <taxon>Bacillati</taxon>
        <taxon>Bacillota</taxon>
        <taxon>Bacilli</taxon>
        <taxon>Bacillales</taxon>
        <taxon>Bacillaceae</taxon>
        <taxon>Bacillus</taxon>
    </lineage>
</organism>
<gene>
    <name evidence="1" type="primary">dtd</name>
    <name type="ordered locus">BLi02886</name>
    <name type="ordered locus">BL01123</name>
</gene>
<keyword id="KW-0963">Cytoplasm</keyword>
<keyword id="KW-0378">Hydrolase</keyword>
<keyword id="KW-1185">Reference proteome</keyword>
<keyword id="KW-0694">RNA-binding</keyword>
<keyword id="KW-0820">tRNA-binding</keyword>